<geneLocation type="chloroplast"/>
<protein>
    <recommendedName>
        <fullName evidence="1">NAD(P)H-quinone oxidoreductase subunit I, chloroplastic</fullName>
        <ecNumber evidence="1">7.1.1.-</ecNumber>
    </recommendedName>
    <alternativeName>
        <fullName evidence="1">NAD(P)H dehydrogenase subunit I</fullName>
        <shortName evidence="1">NDH subunit I</shortName>
    </alternativeName>
    <alternativeName>
        <fullName evidence="1">NADH-plastoquinone oxidoreductase subunit I</fullName>
    </alternativeName>
</protein>
<dbReference type="EC" id="7.1.1.-" evidence="1"/>
<dbReference type="EMBL" id="AF383781">
    <property type="protein sequence ID" value="AAN61722.1"/>
    <property type="molecule type" value="Genomic_DNA"/>
</dbReference>
<dbReference type="SMR" id="Q8HVT2"/>
<dbReference type="GO" id="GO:0009535">
    <property type="term" value="C:chloroplast thylakoid membrane"/>
    <property type="evidence" value="ECO:0007669"/>
    <property type="project" value="UniProtKB-SubCell"/>
</dbReference>
<dbReference type="GO" id="GO:0051539">
    <property type="term" value="F:4 iron, 4 sulfur cluster binding"/>
    <property type="evidence" value="ECO:0007669"/>
    <property type="project" value="UniProtKB-KW"/>
</dbReference>
<dbReference type="GO" id="GO:0005506">
    <property type="term" value="F:iron ion binding"/>
    <property type="evidence" value="ECO:0007669"/>
    <property type="project" value="UniProtKB-UniRule"/>
</dbReference>
<dbReference type="GO" id="GO:0008137">
    <property type="term" value="F:NADH dehydrogenase (ubiquinone) activity"/>
    <property type="evidence" value="ECO:0007669"/>
    <property type="project" value="InterPro"/>
</dbReference>
<dbReference type="GO" id="GO:0048038">
    <property type="term" value="F:quinone binding"/>
    <property type="evidence" value="ECO:0007669"/>
    <property type="project" value="UniProtKB-KW"/>
</dbReference>
<dbReference type="GO" id="GO:0019684">
    <property type="term" value="P:photosynthesis, light reaction"/>
    <property type="evidence" value="ECO:0007669"/>
    <property type="project" value="UniProtKB-UniRule"/>
</dbReference>
<dbReference type="FunFam" id="3.30.70.3270:FF:000006">
    <property type="entry name" value="NAD(P)H-quinone oxidoreductase subunit I, chloroplastic"/>
    <property type="match status" value="1"/>
</dbReference>
<dbReference type="Gene3D" id="3.30.70.3270">
    <property type="match status" value="1"/>
</dbReference>
<dbReference type="HAMAP" id="MF_01351">
    <property type="entry name" value="NDH1_NuoI"/>
    <property type="match status" value="1"/>
</dbReference>
<dbReference type="InterPro" id="IPR017896">
    <property type="entry name" value="4Fe4S_Fe-S-bd"/>
</dbReference>
<dbReference type="InterPro" id="IPR017900">
    <property type="entry name" value="4Fe4S_Fe_S_CS"/>
</dbReference>
<dbReference type="InterPro" id="IPR010226">
    <property type="entry name" value="NADH_quinone_OxRdtase_chainI"/>
</dbReference>
<dbReference type="InterPro" id="IPR004497">
    <property type="entry name" value="NDHI"/>
</dbReference>
<dbReference type="NCBIfam" id="TIGR00403">
    <property type="entry name" value="ndhI"/>
    <property type="match status" value="1"/>
</dbReference>
<dbReference type="NCBIfam" id="TIGR01971">
    <property type="entry name" value="NuoI"/>
    <property type="match status" value="1"/>
</dbReference>
<dbReference type="NCBIfam" id="NF004537">
    <property type="entry name" value="PRK05888.1-3"/>
    <property type="match status" value="1"/>
</dbReference>
<dbReference type="PANTHER" id="PTHR47275">
    <property type="entry name" value="NAD(P)H-QUINONE OXIDOREDUCTASE SUBUNIT I, CHLOROPLASTIC"/>
    <property type="match status" value="1"/>
</dbReference>
<dbReference type="PANTHER" id="PTHR47275:SF1">
    <property type="entry name" value="NAD(P)H-QUINONE OXIDOREDUCTASE SUBUNIT I, CHLOROPLASTIC"/>
    <property type="match status" value="1"/>
</dbReference>
<dbReference type="Pfam" id="PF00037">
    <property type="entry name" value="Fer4"/>
    <property type="match status" value="2"/>
</dbReference>
<dbReference type="SUPFAM" id="SSF54862">
    <property type="entry name" value="4Fe-4S ferredoxins"/>
    <property type="match status" value="1"/>
</dbReference>
<dbReference type="PROSITE" id="PS00198">
    <property type="entry name" value="4FE4S_FER_1"/>
    <property type="match status" value="2"/>
</dbReference>
<dbReference type="PROSITE" id="PS51379">
    <property type="entry name" value="4FE4S_FER_2"/>
    <property type="match status" value="2"/>
</dbReference>
<feature type="chain" id="PRO_0000245658" description="NAD(P)H-quinone oxidoreductase subunit I, chloroplastic">
    <location>
        <begin position="1"/>
        <end position="166"/>
    </location>
</feature>
<feature type="domain" description="4Fe-4S ferredoxin-type 1" evidence="1">
    <location>
        <begin position="55"/>
        <end position="84"/>
    </location>
</feature>
<feature type="domain" description="4Fe-4S ferredoxin-type 2" evidence="1">
    <location>
        <begin position="95"/>
        <end position="124"/>
    </location>
</feature>
<feature type="binding site" evidence="1">
    <location>
        <position position="64"/>
    </location>
    <ligand>
        <name>[4Fe-4S] cluster</name>
        <dbReference type="ChEBI" id="CHEBI:49883"/>
        <label>1</label>
    </ligand>
</feature>
<feature type="binding site" evidence="1">
    <location>
        <position position="67"/>
    </location>
    <ligand>
        <name>[4Fe-4S] cluster</name>
        <dbReference type="ChEBI" id="CHEBI:49883"/>
        <label>1</label>
    </ligand>
</feature>
<feature type="binding site" evidence="1">
    <location>
        <position position="70"/>
    </location>
    <ligand>
        <name>[4Fe-4S] cluster</name>
        <dbReference type="ChEBI" id="CHEBI:49883"/>
        <label>1</label>
    </ligand>
</feature>
<feature type="binding site" evidence="1">
    <location>
        <position position="74"/>
    </location>
    <ligand>
        <name>[4Fe-4S] cluster</name>
        <dbReference type="ChEBI" id="CHEBI:49883"/>
        <label>2</label>
    </ligand>
</feature>
<feature type="binding site" evidence="1">
    <location>
        <position position="104"/>
    </location>
    <ligand>
        <name>[4Fe-4S] cluster</name>
        <dbReference type="ChEBI" id="CHEBI:49883"/>
        <label>2</label>
    </ligand>
</feature>
<feature type="binding site" evidence="1">
    <location>
        <position position="107"/>
    </location>
    <ligand>
        <name>[4Fe-4S] cluster</name>
        <dbReference type="ChEBI" id="CHEBI:49883"/>
        <label>2</label>
    </ligand>
</feature>
<feature type="binding site" evidence="1">
    <location>
        <position position="110"/>
    </location>
    <ligand>
        <name>[4Fe-4S] cluster</name>
        <dbReference type="ChEBI" id="CHEBI:49883"/>
        <label>2</label>
    </ligand>
</feature>
<feature type="binding site" evidence="1">
    <location>
        <position position="114"/>
    </location>
    <ligand>
        <name>[4Fe-4S] cluster</name>
        <dbReference type="ChEBI" id="CHEBI:49883"/>
        <label>1</label>
    </ligand>
</feature>
<organism>
    <name type="scientific">Encelia californica</name>
    <name type="common">Bush sunflower</name>
    <dbReference type="NCBI Taxonomy" id="183026"/>
    <lineage>
        <taxon>Eukaryota</taxon>
        <taxon>Viridiplantae</taxon>
        <taxon>Streptophyta</taxon>
        <taxon>Embryophyta</taxon>
        <taxon>Tracheophyta</taxon>
        <taxon>Spermatophyta</taxon>
        <taxon>Magnoliopsida</taxon>
        <taxon>eudicotyledons</taxon>
        <taxon>Gunneridae</taxon>
        <taxon>Pentapetalae</taxon>
        <taxon>asterids</taxon>
        <taxon>campanulids</taxon>
        <taxon>Asterales</taxon>
        <taxon>Asteraceae</taxon>
        <taxon>Asteroideae</taxon>
        <taxon>Heliantheae alliance</taxon>
        <taxon>Heliantheae</taxon>
        <taxon>Encelia</taxon>
    </lineage>
</organism>
<accession>Q8HVT2</accession>
<reference key="1">
    <citation type="submission" date="2003-01" db="EMBL/GenBank/DDBJ databases">
        <title>Chloroplast DNA phylogeny of tribe Heliantheae (Asteraceae).</title>
        <authorList>
            <person name="Panero J.L."/>
            <person name="Baldwin B.G."/>
            <person name="Schilling E.E."/>
            <person name="Clevinger J.A."/>
        </authorList>
    </citation>
    <scope>NUCLEOTIDE SEQUENCE [LARGE SCALE GENOMIC DNA]</scope>
</reference>
<evidence type="ECO:0000255" key="1">
    <source>
        <dbReference type="HAMAP-Rule" id="MF_01351"/>
    </source>
</evidence>
<comment type="function">
    <text evidence="1">NDH shuttles electrons from NAD(P)H:plastoquinone, via FMN and iron-sulfur (Fe-S) centers, to quinones in the photosynthetic chain and possibly in a chloroplast respiratory chain. The immediate electron acceptor for the enzyme in this species is believed to be plastoquinone. Couples the redox reaction to proton translocation, and thus conserves the redox energy in a proton gradient.</text>
</comment>
<comment type="catalytic activity">
    <reaction evidence="1">
        <text>a plastoquinone + NADH + (n+1) H(+)(in) = a plastoquinol + NAD(+) + n H(+)(out)</text>
        <dbReference type="Rhea" id="RHEA:42608"/>
        <dbReference type="Rhea" id="RHEA-COMP:9561"/>
        <dbReference type="Rhea" id="RHEA-COMP:9562"/>
        <dbReference type="ChEBI" id="CHEBI:15378"/>
        <dbReference type="ChEBI" id="CHEBI:17757"/>
        <dbReference type="ChEBI" id="CHEBI:57540"/>
        <dbReference type="ChEBI" id="CHEBI:57945"/>
        <dbReference type="ChEBI" id="CHEBI:62192"/>
    </reaction>
</comment>
<comment type="catalytic activity">
    <reaction evidence="1">
        <text>a plastoquinone + NADPH + (n+1) H(+)(in) = a plastoquinol + NADP(+) + n H(+)(out)</text>
        <dbReference type="Rhea" id="RHEA:42612"/>
        <dbReference type="Rhea" id="RHEA-COMP:9561"/>
        <dbReference type="Rhea" id="RHEA-COMP:9562"/>
        <dbReference type="ChEBI" id="CHEBI:15378"/>
        <dbReference type="ChEBI" id="CHEBI:17757"/>
        <dbReference type="ChEBI" id="CHEBI:57783"/>
        <dbReference type="ChEBI" id="CHEBI:58349"/>
        <dbReference type="ChEBI" id="CHEBI:62192"/>
    </reaction>
</comment>
<comment type="cofactor">
    <cofactor evidence="1">
        <name>[4Fe-4S] cluster</name>
        <dbReference type="ChEBI" id="CHEBI:49883"/>
    </cofactor>
    <text evidence="1">Binds 2 [4Fe-4S] clusters per subunit.</text>
</comment>
<comment type="subunit">
    <text evidence="1">NDH is composed of at least 16 different subunits, 5 of which are encoded in the nucleus.</text>
</comment>
<comment type="subcellular location">
    <subcellularLocation>
        <location evidence="1">Plastid</location>
        <location evidence="1">Chloroplast thylakoid membrane</location>
        <topology evidence="1">Peripheral membrane protein</topology>
    </subcellularLocation>
</comment>
<comment type="similarity">
    <text evidence="1">Belongs to the complex I 23 kDa subunit family.</text>
</comment>
<name>NDHI_ENCCL</name>
<sequence length="166" mass="19518">MFPMVTEFMNYGQQTVRAARYIGQGFMITLSHANRLPVTIQYPYEKLITSERFRGRIHFEFDKCIACEVCVRVCPIDLPVVDWKLETDIRKKRLLNYSIDFGICIFCGNCVEYCPTNCLSMTEEYELSTYDRHELNYNQIALGRLPMSIIDDYTIRTILNLPERKT</sequence>
<gene>
    <name evidence="1" type="primary">ndhI</name>
</gene>
<proteinExistence type="inferred from homology"/>
<keyword id="KW-0004">4Fe-4S</keyword>
<keyword id="KW-0150">Chloroplast</keyword>
<keyword id="KW-0408">Iron</keyword>
<keyword id="KW-0411">Iron-sulfur</keyword>
<keyword id="KW-0472">Membrane</keyword>
<keyword id="KW-0479">Metal-binding</keyword>
<keyword id="KW-0520">NAD</keyword>
<keyword id="KW-0521">NADP</keyword>
<keyword id="KW-0934">Plastid</keyword>
<keyword id="KW-0618">Plastoquinone</keyword>
<keyword id="KW-0874">Quinone</keyword>
<keyword id="KW-0677">Repeat</keyword>
<keyword id="KW-0793">Thylakoid</keyword>
<keyword id="KW-1278">Translocase</keyword>